<protein>
    <recommendedName>
        <fullName>Inhibitor of vertebrate lysozyme</fullName>
    </recommendedName>
</protein>
<name>IVY_ECOLI</name>
<proteinExistence type="evidence at protein level"/>
<evidence type="ECO:0000269" key="1">
    <source>
    </source>
</evidence>
<evidence type="ECO:0000269" key="2">
    <source ref="5"/>
</evidence>
<evidence type="ECO:0000305" key="3"/>
<evidence type="ECO:0007829" key="4">
    <source>
        <dbReference type="PDB" id="1GPQ"/>
    </source>
</evidence>
<evidence type="ECO:0007829" key="5">
    <source>
        <dbReference type="PDB" id="1XS0"/>
    </source>
</evidence>
<dbReference type="EMBL" id="U70214">
    <property type="protein sequence ID" value="AAB08642.1"/>
    <property type="molecule type" value="Genomic_DNA"/>
</dbReference>
<dbReference type="EMBL" id="U00096">
    <property type="protein sequence ID" value="AAC73324.1"/>
    <property type="molecule type" value="Genomic_DNA"/>
</dbReference>
<dbReference type="EMBL" id="AP009048">
    <property type="protein sequence ID" value="BAA77890.1"/>
    <property type="molecule type" value="Genomic_DNA"/>
</dbReference>
<dbReference type="PIR" id="E64746">
    <property type="entry name" value="E64746"/>
</dbReference>
<dbReference type="RefSeq" id="NP_414755.1">
    <property type="nucleotide sequence ID" value="NC_000913.3"/>
</dbReference>
<dbReference type="PDB" id="1GPQ">
    <property type="method" value="X-ray"/>
    <property type="resolution" value="1.60 A"/>
    <property type="chains" value="A/B=29-156"/>
</dbReference>
<dbReference type="PDB" id="1XS0">
    <property type="method" value="X-ray"/>
    <property type="resolution" value="1.58 A"/>
    <property type="chains" value="A/B/C=29-156"/>
</dbReference>
<dbReference type="PDBsum" id="1GPQ"/>
<dbReference type="PDBsum" id="1XS0"/>
<dbReference type="SMR" id="P0AD59"/>
<dbReference type="BioGRID" id="4261212">
    <property type="interactions" value="10"/>
</dbReference>
<dbReference type="DIP" id="DIP-10051N"/>
<dbReference type="FunCoup" id="P0AD59">
    <property type="interactions" value="31"/>
</dbReference>
<dbReference type="IntAct" id="P0AD59">
    <property type="interactions" value="1"/>
</dbReference>
<dbReference type="STRING" id="511145.b0220"/>
<dbReference type="jPOST" id="P0AD59"/>
<dbReference type="PaxDb" id="511145-b0220"/>
<dbReference type="EnsemblBacteria" id="AAC73324">
    <property type="protein sequence ID" value="AAC73324"/>
    <property type="gene ID" value="b0220"/>
</dbReference>
<dbReference type="GeneID" id="946530"/>
<dbReference type="KEGG" id="ecj:JW0210"/>
<dbReference type="KEGG" id="eco:b0220"/>
<dbReference type="PATRIC" id="fig|1411691.4.peg.2063"/>
<dbReference type="EchoBASE" id="EB3317"/>
<dbReference type="eggNOG" id="ENOG50305HJ">
    <property type="taxonomic scope" value="Bacteria"/>
</dbReference>
<dbReference type="HOGENOM" id="CLU_109262_0_0_6"/>
<dbReference type="InParanoid" id="P0AD59"/>
<dbReference type="OMA" id="DCAAQNI"/>
<dbReference type="OrthoDB" id="9033596at2"/>
<dbReference type="BioCyc" id="EcoCyc:G6104-MONOMER"/>
<dbReference type="EvolutionaryTrace" id="P0AD59"/>
<dbReference type="PRO" id="PR:P0AD59"/>
<dbReference type="Proteomes" id="UP000000625">
    <property type="component" value="Chromosome"/>
</dbReference>
<dbReference type="GO" id="GO:0030288">
    <property type="term" value="C:outer membrane-bounded periplasmic space"/>
    <property type="evidence" value="ECO:0000314"/>
    <property type="project" value="EcoCyc"/>
</dbReference>
<dbReference type="GO" id="GO:0060241">
    <property type="term" value="F:lysozyme inhibitor activity"/>
    <property type="evidence" value="ECO:0000314"/>
    <property type="project" value="EcoCyc"/>
</dbReference>
<dbReference type="GO" id="GO:0042803">
    <property type="term" value="F:protein homodimerization activity"/>
    <property type="evidence" value="ECO:0000314"/>
    <property type="project" value="EcoCyc"/>
</dbReference>
<dbReference type="GO" id="GO:0061077">
    <property type="term" value="P:chaperone-mediated protein folding"/>
    <property type="evidence" value="ECO:0000314"/>
    <property type="project" value="EcoCyc"/>
</dbReference>
<dbReference type="FunFam" id="3.40.1420.10:FF:000001">
    <property type="entry name" value="Inhibitor of vertebrate lysozyme"/>
    <property type="match status" value="1"/>
</dbReference>
<dbReference type="Gene3D" id="3.40.1420.10">
    <property type="entry name" value="Inhibitor of vertebrate lysozyme"/>
    <property type="match status" value="1"/>
</dbReference>
<dbReference type="InterPro" id="IPR036501">
    <property type="entry name" value="Inhibitor_vert_lysozyme_sf"/>
</dbReference>
<dbReference type="InterPro" id="IPR014453">
    <property type="entry name" value="Inhibitor_vertebrate_lysozyme"/>
</dbReference>
<dbReference type="NCBIfam" id="NF007443">
    <property type="entry name" value="PRK09993.1"/>
    <property type="match status" value="1"/>
</dbReference>
<dbReference type="Pfam" id="PF08816">
    <property type="entry name" value="Ivy"/>
    <property type="match status" value="1"/>
</dbReference>
<dbReference type="PIRSF" id="PIRSF009103">
    <property type="entry name" value="Ivy"/>
    <property type="match status" value="1"/>
</dbReference>
<dbReference type="SUPFAM" id="SSF89872">
    <property type="entry name" value="Inhibitor of vertebrate lysozyme, Ivy"/>
    <property type="match status" value="1"/>
</dbReference>
<feature type="signal peptide" evidence="1 2">
    <location>
        <begin position="1"/>
        <end position="28"/>
    </location>
</feature>
<feature type="chain" id="PRO_0000016546" description="Inhibitor of vertebrate lysozyme">
    <location>
        <begin position="29"/>
        <end position="157"/>
    </location>
</feature>
<feature type="site" description="Important for lysozyme inhibition">
    <location>
        <position position="88"/>
    </location>
</feature>
<feature type="disulfide bond">
    <location>
        <begin position="85"/>
        <end position="90"/>
    </location>
</feature>
<feature type="sequence conflict" description="In Ref. 6; AA sequence." evidence="3" ref="6">
    <location>
        <position position="36"/>
    </location>
</feature>
<feature type="helix" evidence="5">
    <location>
        <begin position="34"/>
        <end position="39"/>
    </location>
</feature>
<feature type="turn" evidence="5">
    <location>
        <begin position="41"/>
        <end position="43"/>
    </location>
</feature>
<feature type="helix" evidence="5">
    <location>
        <begin position="44"/>
        <end position="51"/>
    </location>
</feature>
<feature type="helix" evidence="5">
    <location>
        <begin position="59"/>
        <end position="62"/>
    </location>
</feature>
<feature type="strand" evidence="5">
    <location>
        <begin position="65"/>
        <end position="75"/>
    </location>
</feature>
<feature type="strand" evidence="5">
    <location>
        <begin position="77"/>
        <end position="85"/>
    </location>
</feature>
<feature type="turn" evidence="5">
    <location>
        <begin position="90"/>
        <end position="92"/>
    </location>
</feature>
<feature type="strand" evidence="5">
    <location>
        <begin position="93"/>
        <end position="99"/>
    </location>
</feature>
<feature type="turn" evidence="5">
    <location>
        <begin position="101"/>
        <end position="103"/>
    </location>
</feature>
<feature type="strand" evidence="5">
    <location>
        <begin position="106"/>
        <end position="113"/>
    </location>
</feature>
<feature type="turn" evidence="5">
    <location>
        <begin position="115"/>
        <end position="117"/>
    </location>
</feature>
<feature type="strand" evidence="5">
    <location>
        <begin position="120"/>
        <end position="125"/>
    </location>
</feature>
<feature type="helix" evidence="4">
    <location>
        <begin position="129"/>
        <end position="131"/>
    </location>
</feature>
<feature type="helix" evidence="5">
    <location>
        <begin position="133"/>
        <end position="144"/>
    </location>
</feature>
<feature type="helix" evidence="5">
    <location>
        <begin position="146"/>
        <end position="149"/>
    </location>
</feature>
<keyword id="KW-0002">3D-structure</keyword>
<keyword id="KW-0903">Direct protein sequencing</keyword>
<keyword id="KW-1015">Disulfide bond</keyword>
<keyword id="KW-0574">Periplasm</keyword>
<keyword id="KW-1185">Reference proteome</keyword>
<keyword id="KW-0732">Signal</keyword>
<sequence length="157" mass="16872">MGRISSGGMMFKAITTVAALVIATSAMAQDDLTISSLAKGETTKAAFNQMVQGHKLPAWVMKGGTYTPAQTVTLGDETYQVMSACKPHDCGSQRIAVMWSEKSNQMTGLFSTIDEKTSQEKLTWLNVNDALSIDGKTVLFAALTGSLENHPDGFNFK</sequence>
<organism>
    <name type="scientific">Escherichia coli (strain K12)</name>
    <dbReference type="NCBI Taxonomy" id="83333"/>
    <lineage>
        <taxon>Bacteria</taxon>
        <taxon>Pseudomonadati</taxon>
        <taxon>Pseudomonadota</taxon>
        <taxon>Gammaproteobacteria</taxon>
        <taxon>Enterobacterales</taxon>
        <taxon>Enterobacteriaceae</taxon>
        <taxon>Escherichia</taxon>
    </lineage>
</organism>
<gene>
    <name type="primary">ivy</name>
    <name type="synonym">ykfE</name>
    <name type="ordered locus">b0220</name>
    <name type="ordered locus">JW0210</name>
</gene>
<reference key="1">
    <citation type="submission" date="1996-02" db="EMBL/GenBank/DDBJ databases">
        <title>Systematic sequencing of the Escherichia coli genome: analysis of the 4.0 - 6.0 min (189,987 - 281,416bp) region.</title>
        <authorList>
            <person name="Takemoto K."/>
            <person name="Mori H."/>
            <person name="Murayama N."/>
            <person name="Kataoka K."/>
            <person name="Yano M."/>
            <person name="Itoh T."/>
            <person name="Yamamoto Y."/>
            <person name="Inokuchi H."/>
            <person name="Miki T."/>
            <person name="Hatada E."/>
            <person name="Fukuda R."/>
            <person name="Ichihara S."/>
            <person name="Mizuno T."/>
            <person name="Makino K."/>
            <person name="Nakata A."/>
            <person name="Yura T."/>
            <person name="Sampei G."/>
            <person name="Mizobuchi K."/>
        </authorList>
    </citation>
    <scope>NUCLEOTIDE SEQUENCE [LARGE SCALE GENOMIC DNA]</scope>
    <source>
        <strain>K12 / W3110 / ATCC 27325 / DSM 5911</strain>
    </source>
</reference>
<reference key="2">
    <citation type="submission" date="1997-01" db="EMBL/GenBank/DDBJ databases">
        <title>Sequence of minutes 4-25 of Escherichia coli.</title>
        <authorList>
            <person name="Chung E."/>
            <person name="Allen E."/>
            <person name="Araujo R."/>
            <person name="Aparicio A.M."/>
            <person name="Davis K."/>
            <person name="Duncan M."/>
            <person name="Federspiel N."/>
            <person name="Hyman R."/>
            <person name="Kalman S."/>
            <person name="Komp C."/>
            <person name="Kurdi O."/>
            <person name="Lew H."/>
            <person name="Lin D."/>
            <person name="Namath A."/>
            <person name="Oefner P."/>
            <person name="Roberts D."/>
            <person name="Schramm S."/>
            <person name="Davis R.W."/>
        </authorList>
    </citation>
    <scope>NUCLEOTIDE SEQUENCE [LARGE SCALE GENOMIC DNA]</scope>
    <source>
        <strain>K12 / MG1655 / ATCC 47076</strain>
    </source>
</reference>
<reference key="3">
    <citation type="journal article" date="1997" name="Science">
        <title>The complete genome sequence of Escherichia coli K-12.</title>
        <authorList>
            <person name="Blattner F.R."/>
            <person name="Plunkett G. III"/>
            <person name="Bloch C.A."/>
            <person name="Perna N.T."/>
            <person name="Burland V."/>
            <person name="Riley M."/>
            <person name="Collado-Vides J."/>
            <person name="Glasner J.D."/>
            <person name="Rode C.K."/>
            <person name="Mayhew G.F."/>
            <person name="Gregor J."/>
            <person name="Davis N.W."/>
            <person name="Kirkpatrick H.A."/>
            <person name="Goeden M.A."/>
            <person name="Rose D.J."/>
            <person name="Mau B."/>
            <person name="Shao Y."/>
        </authorList>
    </citation>
    <scope>NUCLEOTIDE SEQUENCE [LARGE SCALE GENOMIC DNA]</scope>
    <source>
        <strain>K12 / MG1655 / ATCC 47076</strain>
    </source>
</reference>
<reference key="4">
    <citation type="journal article" date="2006" name="Mol. Syst. Biol.">
        <title>Highly accurate genome sequences of Escherichia coli K-12 strains MG1655 and W3110.</title>
        <authorList>
            <person name="Hayashi K."/>
            <person name="Morooka N."/>
            <person name="Yamamoto Y."/>
            <person name="Fujita K."/>
            <person name="Isono K."/>
            <person name="Choi S."/>
            <person name="Ohtsubo E."/>
            <person name="Baba T."/>
            <person name="Wanner B.L."/>
            <person name="Mori H."/>
            <person name="Horiuchi T."/>
        </authorList>
    </citation>
    <scope>NUCLEOTIDE SEQUENCE [LARGE SCALE GENOMIC DNA]</scope>
    <source>
        <strain>K12 / W3110 / ATCC 27325 / DSM 5911</strain>
    </source>
</reference>
<reference key="5">
    <citation type="submission" date="1995-08" db="UniProtKB">
        <authorList>
            <person name="Pasquali C."/>
            <person name="Sanchez J.-C."/>
            <person name="Ravier F."/>
            <person name="Golaz O."/>
            <person name="Hughes G.J."/>
            <person name="Frutiger S."/>
            <person name="Paquet N."/>
            <person name="Wilkins M."/>
            <person name="Appel R.D."/>
            <person name="Bairoch A."/>
            <person name="Hochstrasser D.F."/>
        </authorList>
    </citation>
    <scope>PROTEIN SEQUENCE OF 29-39</scope>
    <source>
        <strain>K12 / W3110 / ATCC 27325 / DSM 5911</strain>
    </source>
</reference>
<reference key="6">
    <citation type="journal article" date="1998" name="FEMS Microbiol. Lett.">
        <title>Small genes/gene-products in Escherichia coli K-12.</title>
        <authorList>
            <person name="Wasinger V.C."/>
            <person name="Humphery-Smith I."/>
        </authorList>
    </citation>
    <scope>PROTEIN SEQUENCE OF 29-38</scope>
    <source>
        <strain>K12</strain>
    </source>
</reference>
<reference key="7">
    <citation type="journal article" date="2001" name="J. Biol. Chem.">
        <title>Escherichia coli ykfE ORFan gene encodes a potent inhibitor of C-type lysozyme.</title>
        <authorList>
            <person name="Montchois V."/>
            <person name="Abergel C."/>
            <person name="Sturgis J."/>
            <person name="Jeudy S."/>
            <person name="Claverie J.-M."/>
        </authorList>
    </citation>
    <scope>CHARACTERIZATION</scope>
    <source>
        <strain>K12 / XL1-Blue</strain>
    </source>
</reference>
<reference key="8">
    <citation type="journal article" date="2000" name="Acta Crystallogr. D">
        <title>Crystallization and preliminary crystallographic study of b0220, an 'ORFan' protein of unknown function from Escherichia coli.</title>
        <authorList>
            <person name="Abergel C."/>
            <person name="Monchois V."/>
            <person name="Chenivesse S."/>
            <person name="Jeudy S."/>
            <person name="Claverie J.-M."/>
        </authorList>
    </citation>
    <scope>CRYSTALLIZATION</scope>
</reference>
<reference key="9">
    <citation type="submission" date="2001-11" db="PDB data bank">
        <title>Structure and evolution of a paradoxical protein family of vertebrate lysozyme inhibitors only found in Gram-negative bacteria.</title>
        <authorList>
            <person name="Abergel C."/>
            <person name="Monchois V."/>
            <person name="Claverie J.-M."/>
        </authorList>
    </citation>
    <scope>X-RAY CRYSTALLOGRAPHY (1.6 ANGSTROMS)</scope>
</reference>
<comment type="function">
    <text>Strong inhibitor of lysozyme C.</text>
</comment>
<comment type="subunit">
    <text>Homodimer.</text>
</comment>
<comment type="subcellular location">
    <subcellularLocation>
        <location>Periplasm</location>
    </subcellularLocation>
</comment>
<comment type="similarity">
    <text evidence="3">Belongs to the ivy family.</text>
</comment>
<accession>P0AD59</accession>
<accession>P45502</accession>
<accession>P77185</accession>